<gene>
    <name evidence="1" type="primary">norV</name>
    <name evidence="1" type="synonym">flrD</name>
    <name type="ordered locus">UTI89_C3072</name>
</gene>
<feature type="chain" id="PRO_0000305592" description="Anaerobic nitric oxide reductase flavorubredoxin">
    <location>
        <begin position="1"/>
        <end position="479"/>
    </location>
</feature>
<feature type="domain" description="Flavodoxin-like" evidence="1">
    <location>
        <begin position="254"/>
        <end position="393"/>
    </location>
</feature>
<feature type="domain" description="Rubredoxin-like" evidence="1">
    <location>
        <begin position="423"/>
        <end position="474"/>
    </location>
</feature>
<feature type="region of interest" description="Zinc metallo-hydrolase">
    <location>
        <begin position="30"/>
        <end position="210"/>
    </location>
</feature>
<feature type="binding site" evidence="1">
    <location>
        <position position="79"/>
    </location>
    <ligand>
        <name>Fe cation</name>
        <dbReference type="ChEBI" id="CHEBI:24875"/>
        <label>1</label>
    </ligand>
</feature>
<feature type="binding site" evidence="1">
    <location>
        <position position="81"/>
    </location>
    <ligand>
        <name>Fe cation</name>
        <dbReference type="ChEBI" id="CHEBI:24875"/>
        <label>1</label>
    </ligand>
</feature>
<feature type="binding site" evidence="1">
    <location>
        <position position="83"/>
    </location>
    <ligand>
        <name>Fe cation</name>
        <dbReference type="ChEBI" id="CHEBI:24875"/>
        <label>2</label>
    </ligand>
</feature>
<feature type="binding site" evidence="1">
    <location>
        <position position="147"/>
    </location>
    <ligand>
        <name>Fe cation</name>
        <dbReference type="ChEBI" id="CHEBI:24875"/>
        <label>1</label>
    </ligand>
</feature>
<feature type="binding site" evidence="1">
    <location>
        <position position="166"/>
    </location>
    <ligand>
        <name>Fe cation</name>
        <dbReference type="ChEBI" id="CHEBI:24875"/>
        <label>1</label>
    </ligand>
</feature>
<feature type="binding site" evidence="1">
    <location>
        <position position="166"/>
    </location>
    <ligand>
        <name>Fe cation</name>
        <dbReference type="ChEBI" id="CHEBI:24875"/>
        <label>2</label>
    </ligand>
</feature>
<feature type="binding site" evidence="1">
    <location>
        <position position="227"/>
    </location>
    <ligand>
        <name>Fe cation</name>
        <dbReference type="ChEBI" id="CHEBI:24875"/>
        <label>2</label>
    </ligand>
</feature>
<feature type="binding site" evidence="1">
    <location>
        <begin position="260"/>
        <end position="264"/>
    </location>
    <ligand>
        <name>FMN</name>
        <dbReference type="ChEBI" id="CHEBI:58210"/>
    </ligand>
</feature>
<feature type="binding site" evidence="1">
    <location>
        <begin position="342"/>
        <end position="369"/>
    </location>
    <ligand>
        <name>FMN</name>
        <dbReference type="ChEBI" id="CHEBI:58210"/>
    </ligand>
</feature>
<feature type="binding site" evidence="1">
    <location>
        <position position="428"/>
    </location>
    <ligand>
        <name>Fe cation</name>
        <dbReference type="ChEBI" id="CHEBI:24875"/>
        <label>3</label>
    </ligand>
</feature>
<feature type="binding site" evidence="1">
    <location>
        <position position="431"/>
    </location>
    <ligand>
        <name>Fe cation</name>
        <dbReference type="ChEBI" id="CHEBI:24875"/>
        <label>3</label>
    </ligand>
</feature>
<feature type="binding site" evidence="1">
    <location>
        <position position="461"/>
    </location>
    <ligand>
        <name>Fe cation</name>
        <dbReference type="ChEBI" id="CHEBI:24875"/>
        <label>3</label>
    </ligand>
</feature>
<feature type="binding site" evidence="1">
    <location>
        <position position="464"/>
    </location>
    <ligand>
        <name>Fe cation</name>
        <dbReference type="ChEBI" id="CHEBI:24875"/>
        <label>3</label>
    </ligand>
</feature>
<accession>Q1R7Z0</accession>
<keyword id="KW-0963">Cytoplasm</keyword>
<keyword id="KW-0249">Electron transport</keyword>
<keyword id="KW-0285">Flavoprotein</keyword>
<keyword id="KW-0288">FMN</keyword>
<keyword id="KW-0408">Iron</keyword>
<keyword id="KW-0479">Metal-binding</keyword>
<keyword id="KW-0560">Oxidoreductase</keyword>
<keyword id="KW-0813">Transport</keyword>
<name>NORV_ECOUT</name>
<sequence>MSIVVKNNIHWVGQRDWEVRDFHGTEYKTLRGSSYNSYLIREEKNVLIDTVDHKFSREFVQNLRNEIDLADIDYIVINHAEEDHAGALTELMAQIPDTPIYCTANAIDSINGHHHHPEWNFNVVKTGDTLDIGNGKQLIFVETPMLHWPDSMMTYLTGDAVLFSNDAFGQHYCDEHLFNDEVDQTELFEQCQRYYANILTPFSRLVTPKITEILGFNLPVDMIATSHGVVWRDNPTQIVELYLKWAADYQEDRITIVYDTMSNNTRMMADAIAQGIAETDPRVAVKIFNVARSDKNEILTNVFRSKGVLVGTSTMNNVMMPKIAGLVEEMTGLRFRNKRASAFGSHGWSGGAVDRLSTRLQDAGFEMSLSLKAKWRPDQDALELCREHGREIARQWALAPLPQSTVNTVVEEETSAATTADLGPRMQCSVCQWIYDPAKGEPMQDVAPGTPWSEVPDNFLCPECSLGKDVFDELASEAK</sequence>
<dbReference type="EMBL" id="CP000243">
    <property type="protein sequence ID" value="ABE08524.1"/>
    <property type="molecule type" value="Genomic_DNA"/>
</dbReference>
<dbReference type="RefSeq" id="WP_000029638.1">
    <property type="nucleotide sequence ID" value="NZ_CP064825.1"/>
</dbReference>
<dbReference type="SMR" id="Q1R7Z0"/>
<dbReference type="KEGG" id="eci:UTI89_C3072"/>
<dbReference type="HOGENOM" id="CLU_017490_0_1_6"/>
<dbReference type="UniPathway" id="UPA00638"/>
<dbReference type="Proteomes" id="UP000001952">
    <property type="component" value="Chromosome"/>
</dbReference>
<dbReference type="GO" id="GO:0005737">
    <property type="term" value="C:cytoplasm"/>
    <property type="evidence" value="ECO:0007669"/>
    <property type="project" value="UniProtKB-SubCell"/>
</dbReference>
<dbReference type="GO" id="GO:0009055">
    <property type="term" value="F:electron transfer activity"/>
    <property type="evidence" value="ECO:0007669"/>
    <property type="project" value="UniProtKB-UniRule"/>
</dbReference>
<dbReference type="GO" id="GO:0010181">
    <property type="term" value="F:FMN binding"/>
    <property type="evidence" value="ECO:0007669"/>
    <property type="project" value="InterPro"/>
</dbReference>
<dbReference type="GO" id="GO:0005506">
    <property type="term" value="F:iron ion binding"/>
    <property type="evidence" value="ECO:0007669"/>
    <property type="project" value="InterPro"/>
</dbReference>
<dbReference type="GO" id="GO:0016966">
    <property type="term" value="F:nitric oxide reductase activity"/>
    <property type="evidence" value="ECO:0007669"/>
    <property type="project" value="InterPro"/>
</dbReference>
<dbReference type="CDD" id="cd07709">
    <property type="entry name" value="flavodiiron_proteins_MBL-fold"/>
    <property type="match status" value="1"/>
</dbReference>
<dbReference type="CDD" id="cd00730">
    <property type="entry name" value="rubredoxin"/>
    <property type="match status" value="1"/>
</dbReference>
<dbReference type="FunFam" id="2.20.28.10:FF:000010">
    <property type="entry name" value="Anaerobic nitric oxide reductase flavorubredoxin"/>
    <property type="match status" value="1"/>
</dbReference>
<dbReference type="FunFam" id="3.40.50.360:FF:000012">
    <property type="entry name" value="Anaerobic nitric oxide reductase flavorubredoxin"/>
    <property type="match status" value="1"/>
</dbReference>
<dbReference type="FunFam" id="3.60.15.10:FF:000009">
    <property type="entry name" value="Anaerobic nitric oxide reductase flavorubredoxin"/>
    <property type="match status" value="1"/>
</dbReference>
<dbReference type="Gene3D" id="2.20.28.10">
    <property type="match status" value="1"/>
</dbReference>
<dbReference type="Gene3D" id="3.40.50.360">
    <property type="match status" value="1"/>
</dbReference>
<dbReference type="Gene3D" id="3.60.15.10">
    <property type="entry name" value="Ribonuclease Z/Hydroxyacylglutathione hydrolase-like"/>
    <property type="match status" value="1"/>
</dbReference>
<dbReference type="HAMAP" id="MF_01312">
    <property type="entry name" value="NorV"/>
    <property type="match status" value="1"/>
</dbReference>
<dbReference type="InterPro" id="IPR023957">
    <property type="entry name" value="Anaer_NO_rdtase_flvorubredoxin"/>
</dbReference>
<dbReference type="InterPro" id="IPR008254">
    <property type="entry name" value="Flavodoxin/NO_synth"/>
</dbReference>
<dbReference type="InterPro" id="IPR029039">
    <property type="entry name" value="Flavoprotein-like_sf"/>
</dbReference>
<dbReference type="InterPro" id="IPR001279">
    <property type="entry name" value="Metallo-B-lactamas"/>
</dbReference>
<dbReference type="InterPro" id="IPR045761">
    <property type="entry name" value="ODP_dom"/>
</dbReference>
<dbReference type="InterPro" id="IPR036866">
    <property type="entry name" value="RibonucZ/Hydroxyglut_hydro"/>
</dbReference>
<dbReference type="InterPro" id="IPR024934">
    <property type="entry name" value="Rubredoxin-like_dom"/>
</dbReference>
<dbReference type="InterPro" id="IPR016440">
    <property type="entry name" value="Rubredoxin-O_OxRdtase"/>
</dbReference>
<dbReference type="InterPro" id="IPR024935">
    <property type="entry name" value="Rubredoxin_dom"/>
</dbReference>
<dbReference type="NCBIfam" id="NF003954">
    <property type="entry name" value="PRK05452.1"/>
    <property type="match status" value="1"/>
</dbReference>
<dbReference type="PANTHER" id="PTHR43717">
    <property type="entry name" value="ANAEROBIC NITRIC OXIDE REDUCTASE FLAVORUBREDOXIN"/>
    <property type="match status" value="1"/>
</dbReference>
<dbReference type="PANTHER" id="PTHR43717:SF1">
    <property type="entry name" value="ANAEROBIC NITRIC OXIDE REDUCTASE FLAVORUBREDOXIN"/>
    <property type="match status" value="1"/>
</dbReference>
<dbReference type="Pfam" id="PF00258">
    <property type="entry name" value="Flavodoxin_1"/>
    <property type="match status" value="1"/>
</dbReference>
<dbReference type="Pfam" id="PF19583">
    <property type="entry name" value="ODP"/>
    <property type="match status" value="1"/>
</dbReference>
<dbReference type="Pfam" id="PF00301">
    <property type="entry name" value="Rubredoxin"/>
    <property type="match status" value="1"/>
</dbReference>
<dbReference type="PIRSF" id="PIRSF005243">
    <property type="entry name" value="ROO"/>
    <property type="match status" value="1"/>
</dbReference>
<dbReference type="PRINTS" id="PR00163">
    <property type="entry name" value="RUBREDOXIN"/>
</dbReference>
<dbReference type="SMART" id="SM00849">
    <property type="entry name" value="Lactamase_B"/>
    <property type="match status" value="1"/>
</dbReference>
<dbReference type="SUPFAM" id="SSF52218">
    <property type="entry name" value="Flavoproteins"/>
    <property type="match status" value="1"/>
</dbReference>
<dbReference type="SUPFAM" id="SSF56281">
    <property type="entry name" value="Metallo-hydrolase/oxidoreductase"/>
    <property type="match status" value="1"/>
</dbReference>
<dbReference type="SUPFAM" id="SSF57802">
    <property type="entry name" value="Rubredoxin-like"/>
    <property type="match status" value="1"/>
</dbReference>
<dbReference type="PROSITE" id="PS50902">
    <property type="entry name" value="FLAVODOXIN_LIKE"/>
    <property type="match status" value="1"/>
</dbReference>
<dbReference type="PROSITE" id="PS50903">
    <property type="entry name" value="RUBREDOXIN_LIKE"/>
    <property type="match status" value="1"/>
</dbReference>
<protein>
    <recommendedName>
        <fullName evidence="1">Anaerobic nitric oxide reductase flavorubredoxin</fullName>
        <shortName evidence="1">FlRd</shortName>
        <shortName evidence="1">FlavoRb</shortName>
    </recommendedName>
</protein>
<comment type="function">
    <text evidence="1">Anaerobic nitric oxide reductase; uses NADH to detoxify nitric oxide (NO), protecting several 4Fe-4S NO-sensitive enzymes. Has at least 2 reductase partners, only one of which (NorW, flavorubredoxin reductase) has been identified. NO probably binds to the di-iron center; electrons enter from the NorW at rubredoxin and are transferred sequentially to the FMN center and the di-iron center. Also able to function as an aerobic oxygen reductase.</text>
</comment>
<comment type="cofactor">
    <cofactor evidence="1">
        <name>Fe cation</name>
        <dbReference type="ChEBI" id="CHEBI:24875"/>
    </cofactor>
    <text evidence="1">Binds 3 Fe cations per monomer.</text>
</comment>
<comment type="cofactor">
    <cofactor evidence="1">
        <name>FMN</name>
        <dbReference type="ChEBI" id="CHEBI:58210"/>
    </cofactor>
    <text evidence="1">Binds 1 FMN per monomer.</text>
</comment>
<comment type="pathway">
    <text evidence="1">Nitrogen metabolism; nitric oxide reduction.</text>
</comment>
<comment type="subunit">
    <text evidence="1">Homotetramer.</text>
</comment>
<comment type="subcellular location">
    <subcellularLocation>
        <location evidence="1">Cytoplasm</location>
    </subcellularLocation>
</comment>
<comment type="similarity">
    <text evidence="1">In the N-terminal section; belongs to the zinc metallo-hydrolase group 3 family.</text>
</comment>
<proteinExistence type="inferred from homology"/>
<reference key="1">
    <citation type="journal article" date="2006" name="Proc. Natl. Acad. Sci. U.S.A.">
        <title>Identification of genes subject to positive selection in uropathogenic strains of Escherichia coli: a comparative genomics approach.</title>
        <authorList>
            <person name="Chen S.L."/>
            <person name="Hung C.-S."/>
            <person name="Xu J."/>
            <person name="Reigstad C.S."/>
            <person name="Magrini V."/>
            <person name="Sabo A."/>
            <person name="Blasiar D."/>
            <person name="Bieri T."/>
            <person name="Meyer R.R."/>
            <person name="Ozersky P."/>
            <person name="Armstrong J.R."/>
            <person name="Fulton R.S."/>
            <person name="Latreille J.P."/>
            <person name="Spieth J."/>
            <person name="Hooton T.M."/>
            <person name="Mardis E.R."/>
            <person name="Hultgren S.J."/>
            <person name="Gordon J.I."/>
        </authorList>
    </citation>
    <scope>NUCLEOTIDE SEQUENCE [LARGE SCALE GENOMIC DNA]</scope>
    <source>
        <strain>UTI89 / UPEC</strain>
    </source>
</reference>
<evidence type="ECO:0000255" key="1">
    <source>
        <dbReference type="HAMAP-Rule" id="MF_01312"/>
    </source>
</evidence>
<organism>
    <name type="scientific">Escherichia coli (strain UTI89 / UPEC)</name>
    <dbReference type="NCBI Taxonomy" id="364106"/>
    <lineage>
        <taxon>Bacteria</taxon>
        <taxon>Pseudomonadati</taxon>
        <taxon>Pseudomonadota</taxon>
        <taxon>Gammaproteobacteria</taxon>
        <taxon>Enterobacterales</taxon>
        <taxon>Enterobacteriaceae</taxon>
        <taxon>Escherichia</taxon>
    </lineage>
</organism>